<comment type="function">
    <text evidence="1">Might take part in the signal recognition particle (SRP) pathway. This is inferred from the conservation of its genetic proximity to ftsY/ffh. May be a regulatory protein.</text>
</comment>
<comment type="similarity">
    <text evidence="1">Belongs to the UPF0122 family.</text>
</comment>
<name>Y3860_BACC0</name>
<protein>
    <recommendedName>
        <fullName evidence="1">UPF0122 protein BCAH820_3860</fullName>
    </recommendedName>
</protein>
<organism>
    <name type="scientific">Bacillus cereus (strain AH820)</name>
    <dbReference type="NCBI Taxonomy" id="405535"/>
    <lineage>
        <taxon>Bacteria</taxon>
        <taxon>Bacillati</taxon>
        <taxon>Bacillota</taxon>
        <taxon>Bacilli</taxon>
        <taxon>Bacillales</taxon>
        <taxon>Bacillaceae</taxon>
        <taxon>Bacillus</taxon>
        <taxon>Bacillus cereus group</taxon>
    </lineage>
</organism>
<sequence>MLEKTTRMNYLFDFYQSLLTQKQRSYMSLYYLDDLSLGEIAEEFDVSRQAVYDNIKRTEAMLEEYEEKLVLLQKFQERQRLVAKLKQLISEEEHVNEEMKQVVEAIEKLD</sequence>
<evidence type="ECO:0000255" key="1">
    <source>
        <dbReference type="HAMAP-Rule" id="MF_00245"/>
    </source>
</evidence>
<dbReference type="EMBL" id="CP001283">
    <property type="protein sequence ID" value="ACK91883.1"/>
    <property type="molecule type" value="Genomic_DNA"/>
</dbReference>
<dbReference type="RefSeq" id="WP_000891062.1">
    <property type="nucleotide sequence ID" value="NC_011773.1"/>
</dbReference>
<dbReference type="SMR" id="B7JJT3"/>
<dbReference type="KEGG" id="bcu:BCAH820_3860"/>
<dbReference type="HOGENOM" id="CLU_129218_1_0_9"/>
<dbReference type="Proteomes" id="UP000001363">
    <property type="component" value="Chromosome"/>
</dbReference>
<dbReference type="Gene3D" id="1.10.10.10">
    <property type="entry name" value="Winged helix-like DNA-binding domain superfamily/Winged helix DNA-binding domain"/>
    <property type="match status" value="1"/>
</dbReference>
<dbReference type="HAMAP" id="MF_00245">
    <property type="entry name" value="UPF0122"/>
    <property type="match status" value="1"/>
</dbReference>
<dbReference type="InterPro" id="IPR013324">
    <property type="entry name" value="RNA_pol_sigma_r3/r4-like"/>
</dbReference>
<dbReference type="InterPro" id="IPR007394">
    <property type="entry name" value="UPF0122"/>
</dbReference>
<dbReference type="InterPro" id="IPR054831">
    <property type="entry name" value="UPF0122_fam_protein"/>
</dbReference>
<dbReference type="InterPro" id="IPR036388">
    <property type="entry name" value="WH-like_DNA-bd_sf"/>
</dbReference>
<dbReference type="NCBIfam" id="NF001068">
    <property type="entry name" value="PRK00118.1-4"/>
    <property type="match status" value="1"/>
</dbReference>
<dbReference type="NCBIfam" id="NF001070">
    <property type="entry name" value="PRK00118.1-6"/>
    <property type="match status" value="1"/>
</dbReference>
<dbReference type="NCBIfam" id="NF045758">
    <property type="entry name" value="YlxM"/>
    <property type="match status" value="1"/>
</dbReference>
<dbReference type="PANTHER" id="PTHR40083">
    <property type="entry name" value="UPF0122 PROTEIN CBO2450/CLC_2298"/>
    <property type="match status" value="1"/>
</dbReference>
<dbReference type="PANTHER" id="PTHR40083:SF1">
    <property type="entry name" value="UPF0122 PROTEIN YLXM"/>
    <property type="match status" value="1"/>
</dbReference>
<dbReference type="Pfam" id="PF04297">
    <property type="entry name" value="UPF0122"/>
    <property type="match status" value="1"/>
</dbReference>
<dbReference type="SUPFAM" id="SSF88659">
    <property type="entry name" value="Sigma3 and sigma4 domains of RNA polymerase sigma factors"/>
    <property type="match status" value="1"/>
</dbReference>
<gene>
    <name type="ordered locus">BCAH820_3860</name>
</gene>
<feature type="chain" id="PRO_1000197585" description="UPF0122 protein BCAH820_3860">
    <location>
        <begin position="1"/>
        <end position="110"/>
    </location>
</feature>
<proteinExistence type="inferred from homology"/>
<reference key="1">
    <citation type="submission" date="2008-10" db="EMBL/GenBank/DDBJ databases">
        <title>Genome sequence of Bacillus cereus AH820.</title>
        <authorList>
            <person name="Dodson R.J."/>
            <person name="Durkin A.S."/>
            <person name="Rosovitz M.J."/>
            <person name="Rasko D.A."/>
            <person name="Hoffmaster A."/>
            <person name="Ravel J."/>
            <person name="Sutton G."/>
        </authorList>
    </citation>
    <scope>NUCLEOTIDE SEQUENCE [LARGE SCALE GENOMIC DNA]</scope>
    <source>
        <strain>AH820</strain>
    </source>
</reference>
<accession>B7JJT3</accession>